<geneLocation type="chloroplast"/>
<sequence length="507" mass="55444">MVTIRADEISNIIRERIEQYNREVKIVNTGTVLQVGDGIARIHGLDEVMAGELVEFEEGTIGIALNLESNNVGVVLMGDGLMIQEGSSVKATGRIAQIPVSEAYLGRVINALAKPIDGRGEISASESRLIESPAPGIISRRSVYEPLQTGLIAIDSMIPIGRGQRELIIGDRQTGKTAVATDTILNQQGQNVICVYVAIGQKASSVAQVVTTFQERGAMEYTIVVAETADSPATLQYLAPYTGAALAEYFMYRKRHTLIIYDDPSKQAQAYRQMSLLLRRPPGREAYPGDVFYLHSRLLERAAKSSSSLGEGSMTALPIVETQSGDVSAYIPTNVISITDGQIFLSADLFNAGIRPAINVGISVSRVGSAAQIKAMKQVAGKSKLELAQFAELEAFAQFSSDLDKATQNQLARGQRLRELLKQSQAAPLTVEEQIMTIYTGTNGYLDSLEIGQVRKFLAELRNYLKTNKPQFQEIISSTKTFTEEAETLLKETIQEQMERFLLQEQA</sequence>
<protein>
    <recommendedName>
        <fullName evidence="1">ATP synthase subunit alpha, chloroplastic</fullName>
        <ecNumber evidence="1">7.1.2.2</ecNumber>
    </recommendedName>
    <alternativeName>
        <fullName evidence="1">ATP synthase F1 sector subunit alpha</fullName>
    </alternativeName>
    <alternativeName>
        <fullName evidence="1">F-ATPase subunit alpha</fullName>
    </alternativeName>
</protein>
<gene>
    <name evidence="1" type="primary">atpA</name>
</gene>
<evidence type="ECO:0000255" key="1">
    <source>
        <dbReference type="HAMAP-Rule" id="MF_01346"/>
    </source>
</evidence>
<accession>Q0ZJ35</accession>
<proteinExistence type="inferred from homology"/>
<feature type="chain" id="PRO_0000256125" description="ATP synthase subunit alpha, chloroplastic">
    <location>
        <begin position="1"/>
        <end position="507"/>
    </location>
</feature>
<feature type="binding site" evidence="1">
    <location>
        <begin position="170"/>
        <end position="177"/>
    </location>
    <ligand>
        <name>ATP</name>
        <dbReference type="ChEBI" id="CHEBI:30616"/>
    </ligand>
</feature>
<feature type="site" description="Required for activity" evidence="1">
    <location>
        <position position="363"/>
    </location>
</feature>
<reference key="1">
    <citation type="journal article" date="2006" name="BMC Evol. Biol.">
        <title>Phylogenetic analyses of Vitis (Vitaceae) based on complete chloroplast genome sequences: effects of taxon sampling and phylogenetic methods on resolving relationships among rosids.</title>
        <authorList>
            <person name="Jansen R.K."/>
            <person name="Kaittanis C."/>
            <person name="Lee S.-B."/>
            <person name="Saski C."/>
            <person name="Tomkins J."/>
            <person name="Alverson A.J."/>
            <person name="Daniell H."/>
        </authorList>
    </citation>
    <scope>NUCLEOTIDE SEQUENCE [LARGE SCALE GENOMIC DNA]</scope>
    <source>
        <strain>cv. Maxxa</strain>
    </source>
</reference>
<organism>
    <name type="scientific">Vitis vinifera</name>
    <name type="common">Grape</name>
    <dbReference type="NCBI Taxonomy" id="29760"/>
    <lineage>
        <taxon>Eukaryota</taxon>
        <taxon>Viridiplantae</taxon>
        <taxon>Streptophyta</taxon>
        <taxon>Embryophyta</taxon>
        <taxon>Tracheophyta</taxon>
        <taxon>Spermatophyta</taxon>
        <taxon>Magnoliopsida</taxon>
        <taxon>eudicotyledons</taxon>
        <taxon>Gunneridae</taxon>
        <taxon>Pentapetalae</taxon>
        <taxon>rosids</taxon>
        <taxon>Vitales</taxon>
        <taxon>Vitaceae</taxon>
        <taxon>Viteae</taxon>
        <taxon>Vitis</taxon>
    </lineage>
</organism>
<comment type="function">
    <text evidence="1">Produces ATP from ADP in the presence of a proton gradient across the membrane. The alpha chain is a regulatory subunit.</text>
</comment>
<comment type="catalytic activity">
    <reaction evidence="1">
        <text>ATP + H2O + 4 H(+)(in) = ADP + phosphate + 5 H(+)(out)</text>
        <dbReference type="Rhea" id="RHEA:57720"/>
        <dbReference type="ChEBI" id="CHEBI:15377"/>
        <dbReference type="ChEBI" id="CHEBI:15378"/>
        <dbReference type="ChEBI" id="CHEBI:30616"/>
        <dbReference type="ChEBI" id="CHEBI:43474"/>
        <dbReference type="ChEBI" id="CHEBI:456216"/>
        <dbReference type="EC" id="7.1.2.2"/>
    </reaction>
</comment>
<comment type="subunit">
    <text evidence="1">F-type ATPases have 2 components, CF(1) - the catalytic core - and CF(0) - the membrane proton channel. CF(1) has five subunits: alpha(3), beta(3), gamma(1), delta(1), epsilon(1). CF(0) has four main subunits: a, b, b' and c.</text>
</comment>
<comment type="subcellular location">
    <subcellularLocation>
        <location evidence="1">Plastid</location>
        <location evidence="1">Chloroplast thylakoid membrane</location>
        <topology evidence="1">Peripheral membrane protein</topology>
    </subcellularLocation>
</comment>
<comment type="similarity">
    <text evidence="1">Belongs to the ATPase alpha/beta chains family.</text>
</comment>
<name>ATPA_VITVI</name>
<keyword id="KW-0066">ATP synthesis</keyword>
<keyword id="KW-0067">ATP-binding</keyword>
<keyword id="KW-0139">CF(1)</keyword>
<keyword id="KW-0150">Chloroplast</keyword>
<keyword id="KW-0375">Hydrogen ion transport</keyword>
<keyword id="KW-0406">Ion transport</keyword>
<keyword id="KW-0472">Membrane</keyword>
<keyword id="KW-0547">Nucleotide-binding</keyword>
<keyword id="KW-0934">Plastid</keyword>
<keyword id="KW-1185">Reference proteome</keyword>
<keyword id="KW-0793">Thylakoid</keyword>
<keyword id="KW-1278">Translocase</keyword>
<keyword id="KW-0813">Transport</keyword>
<dbReference type="EC" id="7.1.2.2" evidence="1"/>
<dbReference type="EMBL" id="DQ424856">
    <property type="protein sequence ID" value="ABE47519.1"/>
    <property type="molecule type" value="Genomic_DNA"/>
</dbReference>
<dbReference type="RefSeq" id="YP_567061.1">
    <property type="nucleotide sequence ID" value="NC_007957.1"/>
</dbReference>
<dbReference type="SMR" id="Q0ZJ35"/>
<dbReference type="FunCoup" id="Q0ZJ35">
    <property type="interactions" value="283"/>
</dbReference>
<dbReference type="STRING" id="29760.Q0ZJ35"/>
<dbReference type="GeneID" id="4025114"/>
<dbReference type="KEGG" id="vvi:4025114"/>
<dbReference type="InParanoid" id="Q0ZJ35"/>
<dbReference type="OrthoDB" id="843516at71240"/>
<dbReference type="Proteomes" id="UP000009183">
    <property type="component" value="Chloroplast"/>
</dbReference>
<dbReference type="ExpressionAtlas" id="Q0ZJ35">
    <property type="expression patterns" value="baseline and differential"/>
</dbReference>
<dbReference type="GO" id="GO:0009535">
    <property type="term" value="C:chloroplast thylakoid membrane"/>
    <property type="evidence" value="ECO:0007669"/>
    <property type="project" value="UniProtKB-SubCell"/>
</dbReference>
<dbReference type="GO" id="GO:0045259">
    <property type="term" value="C:proton-transporting ATP synthase complex"/>
    <property type="evidence" value="ECO:0007669"/>
    <property type="project" value="UniProtKB-KW"/>
</dbReference>
<dbReference type="GO" id="GO:0043531">
    <property type="term" value="F:ADP binding"/>
    <property type="evidence" value="ECO:0000318"/>
    <property type="project" value="GO_Central"/>
</dbReference>
<dbReference type="GO" id="GO:0005524">
    <property type="term" value="F:ATP binding"/>
    <property type="evidence" value="ECO:0000318"/>
    <property type="project" value="GO_Central"/>
</dbReference>
<dbReference type="GO" id="GO:0046933">
    <property type="term" value="F:proton-transporting ATP synthase activity, rotational mechanism"/>
    <property type="evidence" value="ECO:0007669"/>
    <property type="project" value="UniProtKB-UniRule"/>
</dbReference>
<dbReference type="GO" id="GO:0015986">
    <property type="term" value="P:proton motive force-driven ATP synthesis"/>
    <property type="evidence" value="ECO:0000318"/>
    <property type="project" value="GO_Central"/>
</dbReference>
<dbReference type="CDD" id="cd18113">
    <property type="entry name" value="ATP-synt_F1_alpha_C"/>
    <property type="match status" value="1"/>
</dbReference>
<dbReference type="CDD" id="cd18116">
    <property type="entry name" value="ATP-synt_F1_alpha_N"/>
    <property type="match status" value="1"/>
</dbReference>
<dbReference type="CDD" id="cd01132">
    <property type="entry name" value="F1-ATPase_alpha_CD"/>
    <property type="match status" value="1"/>
</dbReference>
<dbReference type="FunFam" id="1.20.150.20:FF:000001">
    <property type="entry name" value="ATP synthase subunit alpha"/>
    <property type="match status" value="1"/>
</dbReference>
<dbReference type="FunFam" id="2.40.30.20:FF:000001">
    <property type="entry name" value="ATP synthase subunit alpha"/>
    <property type="match status" value="1"/>
</dbReference>
<dbReference type="FunFam" id="3.40.50.300:FF:000002">
    <property type="entry name" value="ATP synthase subunit alpha"/>
    <property type="match status" value="1"/>
</dbReference>
<dbReference type="Gene3D" id="2.40.30.20">
    <property type="match status" value="1"/>
</dbReference>
<dbReference type="Gene3D" id="1.20.150.20">
    <property type="entry name" value="ATP synthase alpha/beta chain, C-terminal domain"/>
    <property type="match status" value="1"/>
</dbReference>
<dbReference type="Gene3D" id="3.40.50.300">
    <property type="entry name" value="P-loop containing nucleotide triphosphate hydrolases"/>
    <property type="match status" value="1"/>
</dbReference>
<dbReference type="HAMAP" id="MF_01346">
    <property type="entry name" value="ATP_synth_alpha_bact"/>
    <property type="match status" value="1"/>
</dbReference>
<dbReference type="InterPro" id="IPR023366">
    <property type="entry name" value="ATP_synth_asu-like_sf"/>
</dbReference>
<dbReference type="InterPro" id="IPR000793">
    <property type="entry name" value="ATP_synth_asu_C"/>
</dbReference>
<dbReference type="InterPro" id="IPR038376">
    <property type="entry name" value="ATP_synth_asu_C_sf"/>
</dbReference>
<dbReference type="InterPro" id="IPR033732">
    <property type="entry name" value="ATP_synth_F1_a_nt-bd_dom"/>
</dbReference>
<dbReference type="InterPro" id="IPR005294">
    <property type="entry name" value="ATP_synth_F1_asu"/>
</dbReference>
<dbReference type="InterPro" id="IPR020003">
    <property type="entry name" value="ATPase_a/bsu_AS"/>
</dbReference>
<dbReference type="InterPro" id="IPR004100">
    <property type="entry name" value="ATPase_F1/V1/A1_a/bsu_N"/>
</dbReference>
<dbReference type="InterPro" id="IPR036121">
    <property type="entry name" value="ATPase_F1/V1/A1_a/bsu_N_sf"/>
</dbReference>
<dbReference type="InterPro" id="IPR000194">
    <property type="entry name" value="ATPase_F1/V1/A1_a/bsu_nucl-bd"/>
</dbReference>
<dbReference type="InterPro" id="IPR027417">
    <property type="entry name" value="P-loop_NTPase"/>
</dbReference>
<dbReference type="NCBIfam" id="TIGR00962">
    <property type="entry name" value="atpA"/>
    <property type="match status" value="1"/>
</dbReference>
<dbReference type="NCBIfam" id="NF009884">
    <property type="entry name" value="PRK13343.1"/>
    <property type="match status" value="1"/>
</dbReference>
<dbReference type="PANTHER" id="PTHR48082">
    <property type="entry name" value="ATP SYNTHASE SUBUNIT ALPHA, MITOCHONDRIAL"/>
    <property type="match status" value="1"/>
</dbReference>
<dbReference type="PANTHER" id="PTHR48082:SF2">
    <property type="entry name" value="ATP SYNTHASE SUBUNIT ALPHA, MITOCHONDRIAL"/>
    <property type="match status" value="1"/>
</dbReference>
<dbReference type="Pfam" id="PF00006">
    <property type="entry name" value="ATP-synt_ab"/>
    <property type="match status" value="1"/>
</dbReference>
<dbReference type="Pfam" id="PF00306">
    <property type="entry name" value="ATP-synt_ab_C"/>
    <property type="match status" value="1"/>
</dbReference>
<dbReference type="Pfam" id="PF02874">
    <property type="entry name" value="ATP-synt_ab_N"/>
    <property type="match status" value="1"/>
</dbReference>
<dbReference type="PIRSF" id="PIRSF039088">
    <property type="entry name" value="F_ATPase_subunit_alpha"/>
    <property type="match status" value="1"/>
</dbReference>
<dbReference type="SUPFAM" id="SSF47917">
    <property type="entry name" value="C-terminal domain of alpha and beta subunits of F1 ATP synthase"/>
    <property type="match status" value="1"/>
</dbReference>
<dbReference type="SUPFAM" id="SSF50615">
    <property type="entry name" value="N-terminal domain of alpha and beta subunits of F1 ATP synthase"/>
    <property type="match status" value="1"/>
</dbReference>
<dbReference type="SUPFAM" id="SSF52540">
    <property type="entry name" value="P-loop containing nucleoside triphosphate hydrolases"/>
    <property type="match status" value="1"/>
</dbReference>
<dbReference type="PROSITE" id="PS00152">
    <property type="entry name" value="ATPASE_ALPHA_BETA"/>
    <property type="match status" value="1"/>
</dbReference>